<reference key="1">
    <citation type="journal article" date="2012" name="Stand. Genomic Sci.">
        <title>Complete genome sequence of Polynucleobacter necessarius subsp. asymbioticus type strain (QLW-P1DMWA-1(T)).</title>
        <authorList>
            <person name="Meincke L."/>
            <person name="Copeland A."/>
            <person name="Lapidus A."/>
            <person name="Lucas S."/>
            <person name="Berry K.W."/>
            <person name="Del Rio T.G."/>
            <person name="Hammon N."/>
            <person name="Dalin E."/>
            <person name="Tice H."/>
            <person name="Pitluck S."/>
            <person name="Richardson P."/>
            <person name="Bruce D."/>
            <person name="Goodwin L."/>
            <person name="Han C."/>
            <person name="Tapia R."/>
            <person name="Detter J.C."/>
            <person name="Schmutz J."/>
            <person name="Brettin T."/>
            <person name="Larimer F."/>
            <person name="Land M."/>
            <person name="Hauser L."/>
            <person name="Kyrpides N.C."/>
            <person name="Ivanova N."/>
            <person name="Goker M."/>
            <person name="Woyke T."/>
            <person name="Wu Q.L."/>
            <person name="Pockl M."/>
            <person name="Hahn M.W."/>
            <person name="Klenk H.P."/>
        </authorList>
    </citation>
    <scope>NUCLEOTIDE SEQUENCE [LARGE SCALE GENOMIC DNA]</scope>
    <source>
        <strain>DSM 18221 / CIP 109841 / QLW-P1DMWA-1</strain>
    </source>
</reference>
<gene>
    <name evidence="1" type="primary">sucC</name>
    <name type="ordered locus">Pnuc_1831</name>
</gene>
<feature type="chain" id="PRO_1000082160" description="Succinate--CoA ligase [ADP-forming] subunit beta">
    <location>
        <begin position="1"/>
        <end position="389"/>
    </location>
</feature>
<feature type="domain" description="ATP-grasp" evidence="1">
    <location>
        <begin position="9"/>
        <end position="244"/>
    </location>
</feature>
<feature type="binding site" evidence="1">
    <location>
        <position position="46"/>
    </location>
    <ligand>
        <name>ATP</name>
        <dbReference type="ChEBI" id="CHEBI:30616"/>
    </ligand>
</feature>
<feature type="binding site" evidence="1">
    <location>
        <begin position="53"/>
        <end position="55"/>
    </location>
    <ligand>
        <name>ATP</name>
        <dbReference type="ChEBI" id="CHEBI:30616"/>
    </ligand>
</feature>
<feature type="binding site" evidence="1">
    <location>
        <position position="99"/>
    </location>
    <ligand>
        <name>ATP</name>
        <dbReference type="ChEBI" id="CHEBI:30616"/>
    </ligand>
</feature>
<feature type="binding site" evidence="1">
    <location>
        <position position="102"/>
    </location>
    <ligand>
        <name>ATP</name>
        <dbReference type="ChEBI" id="CHEBI:30616"/>
    </ligand>
</feature>
<feature type="binding site" evidence="1">
    <location>
        <position position="107"/>
    </location>
    <ligand>
        <name>ATP</name>
        <dbReference type="ChEBI" id="CHEBI:30616"/>
    </ligand>
</feature>
<feature type="binding site" evidence="1">
    <location>
        <position position="199"/>
    </location>
    <ligand>
        <name>Mg(2+)</name>
        <dbReference type="ChEBI" id="CHEBI:18420"/>
    </ligand>
</feature>
<feature type="binding site" evidence="1">
    <location>
        <position position="213"/>
    </location>
    <ligand>
        <name>Mg(2+)</name>
        <dbReference type="ChEBI" id="CHEBI:18420"/>
    </ligand>
</feature>
<feature type="binding site" evidence="1">
    <location>
        <position position="264"/>
    </location>
    <ligand>
        <name>substrate</name>
        <note>ligand shared with subunit alpha</note>
    </ligand>
</feature>
<feature type="binding site" evidence="1">
    <location>
        <begin position="321"/>
        <end position="323"/>
    </location>
    <ligand>
        <name>substrate</name>
        <note>ligand shared with subunit alpha</note>
    </ligand>
</feature>
<sequence length="389" mass="41726">MKIHEYQGKELLRQFNVPVPNGIPAFSVDEAVKAAEKLGGPVWVVKAQIHAGGRGKGGGVKLARSMDEVKKYASEILGMQLKTHQTGPEGQKVNRLLIEDGADIKKEYYFSIVTDRGTQKNVIMASSEGGMDIEEVAESHPEKIIKVFVDPMVGLTDADCDIVAKGIGVPEASIPMARDVFKNLYKTYWDTDASLVEINPLILEGNGKIKALDAKFNFDPNALFRHPEIVAYRDIDEEDAAEIEASKFDLAYISLDGNIGCLVNGAGLAMATMDTIKLFGGEPANFLDVGGGATAEKVTEAFKIMLKNKSVEAILVNIFGGIMRCDVIADGVVTACKAVNLTVPLVVRMKGTNEELGKKILADSGLPIISADSMAEAATKVVAAVAKNK</sequence>
<evidence type="ECO:0000255" key="1">
    <source>
        <dbReference type="HAMAP-Rule" id="MF_00558"/>
    </source>
</evidence>
<comment type="function">
    <text evidence="1">Succinyl-CoA synthetase functions in the citric acid cycle (TCA), coupling the hydrolysis of succinyl-CoA to the synthesis of either ATP or GTP and thus represents the only step of substrate-level phosphorylation in the TCA. The beta subunit provides nucleotide specificity of the enzyme and binds the substrate succinate, while the binding sites for coenzyme A and phosphate are found in the alpha subunit.</text>
</comment>
<comment type="catalytic activity">
    <reaction evidence="1">
        <text>succinate + ATP + CoA = succinyl-CoA + ADP + phosphate</text>
        <dbReference type="Rhea" id="RHEA:17661"/>
        <dbReference type="ChEBI" id="CHEBI:30031"/>
        <dbReference type="ChEBI" id="CHEBI:30616"/>
        <dbReference type="ChEBI" id="CHEBI:43474"/>
        <dbReference type="ChEBI" id="CHEBI:57287"/>
        <dbReference type="ChEBI" id="CHEBI:57292"/>
        <dbReference type="ChEBI" id="CHEBI:456216"/>
        <dbReference type="EC" id="6.2.1.5"/>
    </reaction>
    <physiologicalReaction direction="right-to-left" evidence="1">
        <dbReference type="Rhea" id="RHEA:17663"/>
    </physiologicalReaction>
</comment>
<comment type="catalytic activity">
    <reaction evidence="1">
        <text>GTP + succinate + CoA = succinyl-CoA + GDP + phosphate</text>
        <dbReference type="Rhea" id="RHEA:22120"/>
        <dbReference type="ChEBI" id="CHEBI:30031"/>
        <dbReference type="ChEBI" id="CHEBI:37565"/>
        <dbReference type="ChEBI" id="CHEBI:43474"/>
        <dbReference type="ChEBI" id="CHEBI:57287"/>
        <dbReference type="ChEBI" id="CHEBI:57292"/>
        <dbReference type="ChEBI" id="CHEBI:58189"/>
    </reaction>
    <physiologicalReaction direction="right-to-left" evidence="1">
        <dbReference type="Rhea" id="RHEA:22122"/>
    </physiologicalReaction>
</comment>
<comment type="cofactor">
    <cofactor evidence="1">
        <name>Mg(2+)</name>
        <dbReference type="ChEBI" id="CHEBI:18420"/>
    </cofactor>
    <text evidence="1">Binds 1 Mg(2+) ion per subunit.</text>
</comment>
<comment type="pathway">
    <text evidence="1">Carbohydrate metabolism; tricarboxylic acid cycle; succinate from succinyl-CoA (ligase route): step 1/1.</text>
</comment>
<comment type="subunit">
    <text evidence="1">Heterotetramer of two alpha and two beta subunits.</text>
</comment>
<comment type="similarity">
    <text evidence="1">Belongs to the succinate/malate CoA ligase beta subunit family.</text>
</comment>
<organism>
    <name type="scientific">Polynucleobacter asymbioticus (strain DSM 18221 / CIP 109841 / QLW-P1DMWA-1)</name>
    <name type="common">Polynucleobacter necessarius subsp. asymbioticus</name>
    <dbReference type="NCBI Taxonomy" id="312153"/>
    <lineage>
        <taxon>Bacteria</taxon>
        <taxon>Pseudomonadati</taxon>
        <taxon>Pseudomonadota</taxon>
        <taxon>Betaproteobacteria</taxon>
        <taxon>Burkholderiales</taxon>
        <taxon>Burkholderiaceae</taxon>
        <taxon>Polynucleobacter</taxon>
    </lineage>
</organism>
<protein>
    <recommendedName>
        <fullName evidence="1">Succinate--CoA ligase [ADP-forming] subunit beta</fullName>
        <ecNumber evidence="1">6.2.1.5</ecNumber>
    </recommendedName>
    <alternativeName>
        <fullName evidence="1">Succinyl-CoA synthetase subunit beta</fullName>
        <shortName evidence="1">SCS-beta</shortName>
    </alternativeName>
</protein>
<name>SUCC_POLAQ</name>
<keyword id="KW-0067">ATP-binding</keyword>
<keyword id="KW-0436">Ligase</keyword>
<keyword id="KW-0460">Magnesium</keyword>
<keyword id="KW-0479">Metal-binding</keyword>
<keyword id="KW-0547">Nucleotide-binding</keyword>
<keyword id="KW-1185">Reference proteome</keyword>
<keyword id="KW-0816">Tricarboxylic acid cycle</keyword>
<accession>A4SZY0</accession>
<proteinExistence type="inferred from homology"/>
<dbReference type="EC" id="6.2.1.5" evidence="1"/>
<dbReference type="EMBL" id="CP000655">
    <property type="protein sequence ID" value="ABP35044.1"/>
    <property type="molecule type" value="Genomic_DNA"/>
</dbReference>
<dbReference type="RefSeq" id="WP_011903667.1">
    <property type="nucleotide sequence ID" value="NC_009379.1"/>
</dbReference>
<dbReference type="SMR" id="A4SZY0"/>
<dbReference type="GeneID" id="31482220"/>
<dbReference type="KEGG" id="pnu:Pnuc_1831"/>
<dbReference type="eggNOG" id="COG0045">
    <property type="taxonomic scope" value="Bacteria"/>
</dbReference>
<dbReference type="HOGENOM" id="CLU_037430_0_2_4"/>
<dbReference type="UniPathway" id="UPA00223">
    <property type="reaction ID" value="UER00999"/>
</dbReference>
<dbReference type="Proteomes" id="UP000000231">
    <property type="component" value="Chromosome"/>
</dbReference>
<dbReference type="GO" id="GO:0005829">
    <property type="term" value="C:cytosol"/>
    <property type="evidence" value="ECO:0007669"/>
    <property type="project" value="TreeGrafter"/>
</dbReference>
<dbReference type="GO" id="GO:0042709">
    <property type="term" value="C:succinate-CoA ligase complex"/>
    <property type="evidence" value="ECO:0007669"/>
    <property type="project" value="TreeGrafter"/>
</dbReference>
<dbReference type="GO" id="GO:0005524">
    <property type="term" value="F:ATP binding"/>
    <property type="evidence" value="ECO:0007669"/>
    <property type="project" value="UniProtKB-UniRule"/>
</dbReference>
<dbReference type="GO" id="GO:0000287">
    <property type="term" value="F:magnesium ion binding"/>
    <property type="evidence" value="ECO:0007669"/>
    <property type="project" value="UniProtKB-UniRule"/>
</dbReference>
<dbReference type="GO" id="GO:0004775">
    <property type="term" value="F:succinate-CoA ligase (ADP-forming) activity"/>
    <property type="evidence" value="ECO:0007669"/>
    <property type="project" value="UniProtKB-UniRule"/>
</dbReference>
<dbReference type="GO" id="GO:0004776">
    <property type="term" value="F:succinate-CoA ligase (GDP-forming) activity"/>
    <property type="evidence" value="ECO:0007669"/>
    <property type="project" value="RHEA"/>
</dbReference>
<dbReference type="GO" id="GO:0006104">
    <property type="term" value="P:succinyl-CoA metabolic process"/>
    <property type="evidence" value="ECO:0007669"/>
    <property type="project" value="TreeGrafter"/>
</dbReference>
<dbReference type="GO" id="GO:0006099">
    <property type="term" value="P:tricarboxylic acid cycle"/>
    <property type="evidence" value="ECO:0007669"/>
    <property type="project" value="UniProtKB-UniRule"/>
</dbReference>
<dbReference type="FunFam" id="3.30.1490.20:FF:000002">
    <property type="entry name" value="Succinate--CoA ligase [ADP-forming] subunit beta"/>
    <property type="match status" value="1"/>
</dbReference>
<dbReference type="FunFam" id="3.30.470.20:FF:000002">
    <property type="entry name" value="Succinate--CoA ligase [ADP-forming] subunit beta"/>
    <property type="match status" value="1"/>
</dbReference>
<dbReference type="FunFam" id="3.40.50.261:FF:000001">
    <property type="entry name" value="Succinate--CoA ligase [ADP-forming] subunit beta"/>
    <property type="match status" value="1"/>
</dbReference>
<dbReference type="Gene3D" id="3.30.1490.20">
    <property type="entry name" value="ATP-grasp fold, A domain"/>
    <property type="match status" value="1"/>
</dbReference>
<dbReference type="Gene3D" id="3.30.470.20">
    <property type="entry name" value="ATP-grasp fold, B domain"/>
    <property type="match status" value="1"/>
</dbReference>
<dbReference type="Gene3D" id="3.40.50.261">
    <property type="entry name" value="Succinyl-CoA synthetase domains"/>
    <property type="match status" value="1"/>
</dbReference>
<dbReference type="HAMAP" id="MF_00558">
    <property type="entry name" value="Succ_CoA_beta"/>
    <property type="match status" value="1"/>
</dbReference>
<dbReference type="InterPro" id="IPR011761">
    <property type="entry name" value="ATP-grasp"/>
</dbReference>
<dbReference type="InterPro" id="IPR013650">
    <property type="entry name" value="ATP-grasp_succ-CoA_synth-type"/>
</dbReference>
<dbReference type="InterPro" id="IPR013815">
    <property type="entry name" value="ATP_grasp_subdomain_1"/>
</dbReference>
<dbReference type="InterPro" id="IPR017866">
    <property type="entry name" value="Succ-CoA_synthase_bsu_CS"/>
</dbReference>
<dbReference type="InterPro" id="IPR005811">
    <property type="entry name" value="SUCC_ACL_C"/>
</dbReference>
<dbReference type="InterPro" id="IPR005809">
    <property type="entry name" value="Succ_CoA_ligase-like_bsu"/>
</dbReference>
<dbReference type="InterPro" id="IPR016102">
    <property type="entry name" value="Succinyl-CoA_synth-like"/>
</dbReference>
<dbReference type="NCBIfam" id="NF001913">
    <property type="entry name" value="PRK00696.1"/>
    <property type="match status" value="1"/>
</dbReference>
<dbReference type="NCBIfam" id="TIGR01016">
    <property type="entry name" value="sucCoAbeta"/>
    <property type="match status" value="1"/>
</dbReference>
<dbReference type="PANTHER" id="PTHR11815:SF10">
    <property type="entry name" value="SUCCINATE--COA LIGASE [GDP-FORMING] SUBUNIT BETA, MITOCHONDRIAL"/>
    <property type="match status" value="1"/>
</dbReference>
<dbReference type="PANTHER" id="PTHR11815">
    <property type="entry name" value="SUCCINYL-COA SYNTHETASE BETA CHAIN"/>
    <property type="match status" value="1"/>
</dbReference>
<dbReference type="Pfam" id="PF08442">
    <property type="entry name" value="ATP-grasp_2"/>
    <property type="match status" value="1"/>
</dbReference>
<dbReference type="Pfam" id="PF00549">
    <property type="entry name" value="Ligase_CoA"/>
    <property type="match status" value="1"/>
</dbReference>
<dbReference type="PIRSF" id="PIRSF001554">
    <property type="entry name" value="SucCS_beta"/>
    <property type="match status" value="1"/>
</dbReference>
<dbReference type="SUPFAM" id="SSF56059">
    <property type="entry name" value="Glutathione synthetase ATP-binding domain-like"/>
    <property type="match status" value="1"/>
</dbReference>
<dbReference type="SUPFAM" id="SSF52210">
    <property type="entry name" value="Succinyl-CoA synthetase domains"/>
    <property type="match status" value="1"/>
</dbReference>
<dbReference type="PROSITE" id="PS50975">
    <property type="entry name" value="ATP_GRASP"/>
    <property type="match status" value="1"/>
</dbReference>
<dbReference type="PROSITE" id="PS01217">
    <property type="entry name" value="SUCCINYL_COA_LIG_3"/>
    <property type="match status" value="1"/>
</dbReference>